<keyword id="KW-0963">Cytoplasm</keyword>
<keyword id="KW-0274">FAD</keyword>
<keyword id="KW-0285">Flavoprotein</keyword>
<keyword id="KW-0520">NAD</keyword>
<keyword id="KW-0521">NADP</keyword>
<keyword id="KW-0560">Oxidoreductase</keyword>
<organism>
    <name type="scientific">Yersinia pestis (strain Pestoides F)</name>
    <dbReference type="NCBI Taxonomy" id="386656"/>
    <lineage>
        <taxon>Bacteria</taxon>
        <taxon>Pseudomonadati</taxon>
        <taxon>Pseudomonadota</taxon>
        <taxon>Gammaproteobacteria</taxon>
        <taxon>Enterobacterales</taxon>
        <taxon>Yersiniaceae</taxon>
        <taxon>Yersinia</taxon>
    </lineage>
</organism>
<sequence length="466" mass="51382">MQQHFHFDAIVIGSGPGGEGAAMGLVKQGARVAVIERYNNVGGGCTHWGTIPSKALRHAVSRIIEFNQNPLYSDNARTIKSSFADILNHADRVINQQTRMRQGFYDRNHCHMFSGDASFIDANTVNVRYADGTSDTLQADNIVIATGSRPYRPVNVDFNHERIYDSDTILQLSHEPQHVIIYGAGVIGCEYASIFRGLSVKVDLINTRDRLLAFLDQEMSDALSYHFWNNGVVIRHNEEFEQIEGTTDGVIVHLKSGKKVKADCLLYANGRTGNTSGLGLENIGLEADSRGLLKVNSMYQTALSHVYAVGDVIGYPSLASAAYDQGRIAAQAMIKGEANVHLIEDIPTGIYTIPEISSVGKTEQELTAMKVPYEVGRAQFKHLARAQIVGMDTGSLKILFHRETKQILGIHCFGERAAEIIHIGQAIMEQKGEGNTLEYFVNTTFNYPTMAEAYRVAALNGLNRLF</sequence>
<proteinExistence type="inferred from homology"/>
<protein>
    <recommendedName>
        <fullName evidence="1">Soluble pyridine nucleotide transhydrogenase</fullName>
        <shortName evidence="1">STH</shortName>
        <ecNumber evidence="1">1.6.1.1</ecNumber>
    </recommendedName>
    <alternativeName>
        <fullName evidence="1">NAD(P)(+) transhydrogenase [B-specific]</fullName>
    </alternativeName>
</protein>
<gene>
    <name evidence="1" type="primary">sthA</name>
    <name evidence="1" type="synonym">udhA</name>
    <name type="ordered locus">YPDSF_3526</name>
</gene>
<name>STHA_YERPP</name>
<evidence type="ECO:0000255" key="1">
    <source>
        <dbReference type="HAMAP-Rule" id="MF_00247"/>
    </source>
</evidence>
<reference key="1">
    <citation type="submission" date="2007-02" db="EMBL/GenBank/DDBJ databases">
        <title>Complete sequence of chromosome of Yersinia pestis Pestoides F.</title>
        <authorList>
            <consortium name="US DOE Joint Genome Institute"/>
            <person name="Copeland A."/>
            <person name="Lucas S."/>
            <person name="Lapidus A."/>
            <person name="Barry K."/>
            <person name="Detter J.C."/>
            <person name="Glavina del Rio T."/>
            <person name="Hammon N."/>
            <person name="Israni S."/>
            <person name="Dalin E."/>
            <person name="Tice H."/>
            <person name="Pitluck S."/>
            <person name="Di Bartolo G."/>
            <person name="Chain P."/>
            <person name="Malfatti S."/>
            <person name="Shin M."/>
            <person name="Vergez L."/>
            <person name="Schmutz J."/>
            <person name="Larimer F."/>
            <person name="Land M."/>
            <person name="Hauser L."/>
            <person name="Worsham P."/>
            <person name="Chu M."/>
            <person name="Bearden S."/>
            <person name="Garcia E."/>
            <person name="Richardson P."/>
        </authorList>
    </citation>
    <scope>NUCLEOTIDE SEQUENCE [LARGE SCALE GENOMIC DNA]</scope>
    <source>
        <strain>Pestoides F</strain>
    </source>
</reference>
<dbReference type="EC" id="1.6.1.1" evidence="1"/>
<dbReference type="EMBL" id="CP000668">
    <property type="protein sequence ID" value="ABP41876.1"/>
    <property type="molecule type" value="Genomic_DNA"/>
</dbReference>
<dbReference type="RefSeq" id="WP_002209477.1">
    <property type="nucleotide sequence ID" value="NZ_CP009715.1"/>
</dbReference>
<dbReference type="SMR" id="A4TRG4"/>
<dbReference type="GeneID" id="96663600"/>
<dbReference type="KEGG" id="ypp:YPDSF_3526"/>
<dbReference type="PATRIC" id="fig|386656.14.peg.181"/>
<dbReference type="GO" id="GO:0005829">
    <property type="term" value="C:cytosol"/>
    <property type="evidence" value="ECO:0007669"/>
    <property type="project" value="TreeGrafter"/>
</dbReference>
<dbReference type="GO" id="GO:0004148">
    <property type="term" value="F:dihydrolipoyl dehydrogenase (NADH) activity"/>
    <property type="evidence" value="ECO:0007669"/>
    <property type="project" value="TreeGrafter"/>
</dbReference>
<dbReference type="GO" id="GO:0050660">
    <property type="term" value="F:flavin adenine dinucleotide binding"/>
    <property type="evidence" value="ECO:0007669"/>
    <property type="project" value="TreeGrafter"/>
</dbReference>
<dbReference type="GO" id="GO:0003957">
    <property type="term" value="F:NAD(P)+ transhydrogenase (Si-specific) activity"/>
    <property type="evidence" value="ECO:0007669"/>
    <property type="project" value="UniProtKB-UniRule"/>
</dbReference>
<dbReference type="GO" id="GO:0006103">
    <property type="term" value="P:2-oxoglutarate metabolic process"/>
    <property type="evidence" value="ECO:0007669"/>
    <property type="project" value="TreeGrafter"/>
</dbReference>
<dbReference type="GO" id="GO:0006739">
    <property type="term" value="P:NADP metabolic process"/>
    <property type="evidence" value="ECO:0007669"/>
    <property type="project" value="UniProtKB-UniRule"/>
</dbReference>
<dbReference type="FunFam" id="3.30.390.30:FF:000002">
    <property type="entry name" value="Soluble pyridine nucleotide transhydrogenase"/>
    <property type="match status" value="1"/>
</dbReference>
<dbReference type="FunFam" id="3.50.50.60:FF:000008">
    <property type="entry name" value="Soluble pyridine nucleotide transhydrogenase"/>
    <property type="match status" value="1"/>
</dbReference>
<dbReference type="Gene3D" id="3.30.390.30">
    <property type="match status" value="1"/>
</dbReference>
<dbReference type="Gene3D" id="3.50.50.60">
    <property type="entry name" value="FAD/NAD(P)-binding domain"/>
    <property type="match status" value="2"/>
</dbReference>
<dbReference type="HAMAP" id="MF_00247">
    <property type="entry name" value="SthA"/>
    <property type="match status" value="1"/>
</dbReference>
<dbReference type="InterPro" id="IPR050151">
    <property type="entry name" value="Class-I_Pyr_Nuc-Dis_Oxidored"/>
</dbReference>
<dbReference type="InterPro" id="IPR036188">
    <property type="entry name" value="FAD/NAD-bd_sf"/>
</dbReference>
<dbReference type="InterPro" id="IPR023753">
    <property type="entry name" value="FAD/NAD-binding_dom"/>
</dbReference>
<dbReference type="InterPro" id="IPR016156">
    <property type="entry name" value="FAD/NAD-linked_Rdtase_dimer_sf"/>
</dbReference>
<dbReference type="InterPro" id="IPR001100">
    <property type="entry name" value="Pyr_nuc-diS_OxRdtase"/>
</dbReference>
<dbReference type="InterPro" id="IPR004099">
    <property type="entry name" value="Pyr_nucl-diS_OxRdtase_dimer"/>
</dbReference>
<dbReference type="InterPro" id="IPR022962">
    <property type="entry name" value="STH_gammaproteobact"/>
</dbReference>
<dbReference type="NCBIfam" id="NF003585">
    <property type="entry name" value="PRK05249.1"/>
    <property type="match status" value="1"/>
</dbReference>
<dbReference type="PANTHER" id="PTHR22912">
    <property type="entry name" value="DISULFIDE OXIDOREDUCTASE"/>
    <property type="match status" value="1"/>
</dbReference>
<dbReference type="PANTHER" id="PTHR22912:SF93">
    <property type="entry name" value="SOLUBLE PYRIDINE NUCLEOTIDE TRANSHYDROGENASE"/>
    <property type="match status" value="1"/>
</dbReference>
<dbReference type="Pfam" id="PF07992">
    <property type="entry name" value="Pyr_redox_2"/>
    <property type="match status" value="1"/>
</dbReference>
<dbReference type="Pfam" id="PF02852">
    <property type="entry name" value="Pyr_redox_dim"/>
    <property type="match status" value="1"/>
</dbReference>
<dbReference type="PIRSF" id="PIRSF000350">
    <property type="entry name" value="Mercury_reductase_MerA"/>
    <property type="match status" value="1"/>
</dbReference>
<dbReference type="PRINTS" id="PR00368">
    <property type="entry name" value="FADPNR"/>
</dbReference>
<dbReference type="PRINTS" id="PR00411">
    <property type="entry name" value="PNDRDTASEI"/>
</dbReference>
<dbReference type="SUPFAM" id="SSF51905">
    <property type="entry name" value="FAD/NAD(P)-binding domain"/>
    <property type="match status" value="1"/>
</dbReference>
<dbReference type="SUPFAM" id="SSF55424">
    <property type="entry name" value="FAD/NAD-linked reductases, dimerisation (C-terminal) domain"/>
    <property type="match status" value="1"/>
</dbReference>
<comment type="function">
    <text evidence="1">Conversion of NADPH, generated by peripheral catabolic pathways, to NADH, which can enter the respiratory chain for energy generation.</text>
</comment>
<comment type="catalytic activity">
    <reaction evidence="1">
        <text>NAD(+) + NADPH = NADH + NADP(+)</text>
        <dbReference type="Rhea" id="RHEA:11692"/>
        <dbReference type="ChEBI" id="CHEBI:57540"/>
        <dbReference type="ChEBI" id="CHEBI:57783"/>
        <dbReference type="ChEBI" id="CHEBI:57945"/>
        <dbReference type="ChEBI" id="CHEBI:58349"/>
        <dbReference type="EC" id="1.6.1.1"/>
    </reaction>
</comment>
<comment type="cofactor">
    <cofactor evidence="1">
        <name>FAD</name>
        <dbReference type="ChEBI" id="CHEBI:57692"/>
    </cofactor>
    <text evidence="1">Binds 1 FAD per subunit.</text>
</comment>
<comment type="subcellular location">
    <subcellularLocation>
        <location evidence="1">Cytoplasm</location>
    </subcellularLocation>
</comment>
<comment type="similarity">
    <text evidence="1">Belongs to the class-I pyridine nucleotide-disulfide oxidoreductase family.</text>
</comment>
<accession>A4TRG4</accession>
<feature type="chain" id="PRO_1000012568" description="Soluble pyridine nucleotide transhydrogenase">
    <location>
        <begin position="1"/>
        <end position="466"/>
    </location>
</feature>
<feature type="binding site" evidence="1">
    <location>
        <begin position="36"/>
        <end position="45"/>
    </location>
    <ligand>
        <name>FAD</name>
        <dbReference type="ChEBI" id="CHEBI:57692"/>
    </ligand>
</feature>